<protein>
    <recommendedName>
        <fullName evidence="1">Glycerol-3-phosphate acyltransferase</fullName>
    </recommendedName>
    <alternativeName>
        <fullName evidence="1">Acyl-PO4 G3P acyltransferase</fullName>
    </alternativeName>
    <alternativeName>
        <fullName evidence="1">Acyl-phosphate--glycerol-3-phosphate acyltransferase</fullName>
    </alternativeName>
    <alternativeName>
        <fullName evidence="1">G3P acyltransferase</fullName>
        <shortName evidence="1">GPAT</shortName>
        <ecNumber evidence="1">2.3.1.275</ecNumber>
    </alternativeName>
    <alternativeName>
        <fullName evidence="1">Lysophosphatidic acid synthase</fullName>
        <shortName evidence="1">LPA synthase</shortName>
    </alternativeName>
</protein>
<evidence type="ECO:0000255" key="1">
    <source>
        <dbReference type="HAMAP-Rule" id="MF_01043"/>
    </source>
</evidence>
<dbReference type="EC" id="2.3.1.275" evidence="1"/>
<dbReference type="EMBL" id="AP006840">
    <property type="protein sequence ID" value="BAD40665.1"/>
    <property type="molecule type" value="Genomic_DNA"/>
</dbReference>
<dbReference type="RefSeq" id="WP_011195808.1">
    <property type="nucleotide sequence ID" value="NC_006177.1"/>
</dbReference>
<dbReference type="SMR" id="Q67NS8"/>
<dbReference type="STRING" id="292459.STH1680"/>
<dbReference type="KEGG" id="sth:STH1680"/>
<dbReference type="eggNOG" id="COG0344">
    <property type="taxonomic scope" value="Bacteria"/>
</dbReference>
<dbReference type="HOGENOM" id="CLU_081254_4_0_9"/>
<dbReference type="OrthoDB" id="9777124at2"/>
<dbReference type="UniPathway" id="UPA00085"/>
<dbReference type="Proteomes" id="UP000000417">
    <property type="component" value="Chromosome"/>
</dbReference>
<dbReference type="GO" id="GO:0005886">
    <property type="term" value="C:plasma membrane"/>
    <property type="evidence" value="ECO:0007669"/>
    <property type="project" value="UniProtKB-SubCell"/>
</dbReference>
<dbReference type="GO" id="GO:0043772">
    <property type="term" value="F:acyl-phosphate glycerol-3-phosphate acyltransferase activity"/>
    <property type="evidence" value="ECO:0007669"/>
    <property type="project" value="UniProtKB-UniRule"/>
</dbReference>
<dbReference type="GO" id="GO:0008654">
    <property type="term" value="P:phospholipid biosynthetic process"/>
    <property type="evidence" value="ECO:0007669"/>
    <property type="project" value="UniProtKB-UniRule"/>
</dbReference>
<dbReference type="HAMAP" id="MF_01043">
    <property type="entry name" value="PlsY"/>
    <property type="match status" value="1"/>
</dbReference>
<dbReference type="InterPro" id="IPR003811">
    <property type="entry name" value="G3P_acylTferase_PlsY"/>
</dbReference>
<dbReference type="NCBIfam" id="TIGR00023">
    <property type="entry name" value="glycerol-3-phosphate 1-O-acyltransferase PlsY"/>
    <property type="match status" value="1"/>
</dbReference>
<dbReference type="PANTHER" id="PTHR30309:SF0">
    <property type="entry name" value="GLYCEROL-3-PHOSPHATE ACYLTRANSFERASE-RELATED"/>
    <property type="match status" value="1"/>
</dbReference>
<dbReference type="PANTHER" id="PTHR30309">
    <property type="entry name" value="INNER MEMBRANE PROTEIN YGIH"/>
    <property type="match status" value="1"/>
</dbReference>
<dbReference type="Pfam" id="PF02660">
    <property type="entry name" value="G3P_acyltransf"/>
    <property type="match status" value="1"/>
</dbReference>
<dbReference type="SMART" id="SM01207">
    <property type="entry name" value="G3P_acyltransf"/>
    <property type="match status" value="1"/>
</dbReference>
<name>PLSY_SYMTH</name>
<feature type="chain" id="PRO_0000188473" description="Glycerol-3-phosphate acyltransferase">
    <location>
        <begin position="1"/>
        <end position="199"/>
    </location>
</feature>
<feature type="transmembrane region" description="Helical" evidence="1">
    <location>
        <begin position="4"/>
        <end position="24"/>
    </location>
</feature>
<feature type="transmembrane region" description="Helical" evidence="1">
    <location>
        <begin position="51"/>
        <end position="71"/>
    </location>
</feature>
<feature type="transmembrane region" description="Helical" evidence="1">
    <location>
        <begin position="77"/>
        <end position="97"/>
    </location>
</feature>
<feature type="transmembrane region" description="Helical" evidence="1">
    <location>
        <begin position="111"/>
        <end position="131"/>
    </location>
</feature>
<feature type="transmembrane region" description="Helical" evidence="1">
    <location>
        <begin position="152"/>
        <end position="172"/>
    </location>
</feature>
<organism>
    <name type="scientific">Symbiobacterium thermophilum (strain DSM 24528 / JCM 14929 / IAM 14863 / T)</name>
    <dbReference type="NCBI Taxonomy" id="292459"/>
    <lineage>
        <taxon>Bacteria</taxon>
        <taxon>Bacillati</taxon>
        <taxon>Bacillota</taxon>
        <taxon>Clostridia</taxon>
        <taxon>Eubacteriales</taxon>
        <taxon>Symbiobacteriaceae</taxon>
        <taxon>Symbiobacterium</taxon>
    </lineage>
</organism>
<proteinExistence type="inferred from homology"/>
<keyword id="KW-1003">Cell membrane</keyword>
<keyword id="KW-0444">Lipid biosynthesis</keyword>
<keyword id="KW-0443">Lipid metabolism</keyword>
<keyword id="KW-0472">Membrane</keyword>
<keyword id="KW-0594">Phospholipid biosynthesis</keyword>
<keyword id="KW-1208">Phospholipid metabolism</keyword>
<keyword id="KW-1185">Reference proteome</keyword>
<keyword id="KW-0808">Transferase</keyword>
<keyword id="KW-0812">Transmembrane</keyword>
<keyword id="KW-1133">Transmembrane helix</keyword>
<sequence>MAELVSVAILGYLLGSIPVGFLMGKLRGIDVRRYGSGATGGTNVLRTLGPWAALFTVLCDIGKGLLAAYLGERLAGEWGFVAAGLLASLGHSYPVWLRFRGGKSVATSGGVMLLHYPLAVLVGIAAGALAVVPTRWVSLGSLTASLAVVLQLFLLDAPLSHRLLVVALAVVIYVRHWENMKRIAAGTENRLGVKARPRA</sequence>
<comment type="function">
    <text evidence="1">Catalyzes the transfer of an acyl group from acyl-phosphate (acyl-PO(4)) to glycerol-3-phosphate (G3P) to form lysophosphatidic acid (LPA). This enzyme utilizes acyl-phosphate as fatty acyl donor, but not acyl-CoA or acyl-ACP.</text>
</comment>
<comment type="catalytic activity">
    <reaction evidence="1">
        <text>an acyl phosphate + sn-glycerol 3-phosphate = a 1-acyl-sn-glycero-3-phosphate + phosphate</text>
        <dbReference type="Rhea" id="RHEA:34075"/>
        <dbReference type="ChEBI" id="CHEBI:43474"/>
        <dbReference type="ChEBI" id="CHEBI:57597"/>
        <dbReference type="ChEBI" id="CHEBI:57970"/>
        <dbReference type="ChEBI" id="CHEBI:59918"/>
        <dbReference type="EC" id="2.3.1.275"/>
    </reaction>
</comment>
<comment type="pathway">
    <text evidence="1">Lipid metabolism; phospholipid metabolism.</text>
</comment>
<comment type="subunit">
    <text evidence="1">Probably interacts with PlsX.</text>
</comment>
<comment type="subcellular location">
    <subcellularLocation>
        <location evidence="1">Cell membrane</location>
        <topology evidence="1">Multi-pass membrane protein</topology>
    </subcellularLocation>
</comment>
<comment type="similarity">
    <text evidence="1">Belongs to the PlsY family.</text>
</comment>
<accession>Q67NS8</accession>
<reference key="1">
    <citation type="journal article" date="2004" name="Nucleic Acids Res.">
        <title>Genome sequence of Symbiobacterium thermophilum, an uncultivable bacterium that depends on microbial commensalism.</title>
        <authorList>
            <person name="Ueda K."/>
            <person name="Yamashita A."/>
            <person name="Ishikawa J."/>
            <person name="Shimada M."/>
            <person name="Watsuji T."/>
            <person name="Morimura K."/>
            <person name="Ikeda H."/>
            <person name="Hattori M."/>
            <person name="Beppu T."/>
        </authorList>
    </citation>
    <scope>NUCLEOTIDE SEQUENCE [LARGE SCALE GENOMIC DNA]</scope>
    <source>
        <strain>DSM 24528 / JCM 14929 / IAM 14863 / T</strain>
    </source>
</reference>
<gene>
    <name evidence="1" type="primary">plsY</name>
    <name type="ordered locus">STH1680</name>
</gene>